<dbReference type="EMBL" id="AF095716">
    <property type="protein sequence ID" value="AAC64196.1"/>
    <property type="molecule type" value="mRNA"/>
</dbReference>
<dbReference type="RefSeq" id="NP_001009277.1">
    <property type="nucleotide sequence ID" value="NM_001009277.1"/>
</dbReference>
<dbReference type="SMR" id="O77805"/>
<dbReference type="FunCoup" id="O77805">
    <property type="interactions" value="1"/>
</dbReference>
<dbReference type="STRING" id="9685.ENSFCAP00000024219"/>
<dbReference type="GlyCosmos" id="O77805">
    <property type="glycosylation" value="1 site, No reported glycans"/>
</dbReference>
<dbReference type="PaxDb" id="9685-ENSFCAP00000024219"/>
<dbReference type="GeneID" id="493833"/>
<dbReference type="KEGG" id="fca:493833"/>
<dbReference type="CTD" id="3972"/>
<dbReference type="eggNOG" id="ENOG502S49V">
    <property type="taxonomic scope" value="Eukaryota"/>
</dbReference>
<dbReference type="InParanoid" id="O77805"/>
<dbReference type="OrthoDB" id="8453657at2759"/>
<dbReference type="Proteomes" id="UP000011712">
    <property type="component" value="Unplaced"/>
</dbReference>
<dbReference type="GO" id="GO:0005737">
    <property type="term" value="C:cytoplasm"/>
    <property type="evidence" value="ECO:0000318"/>
    <property type="project" value="GO_Central"/>
</dbReference>
<dbReference type="GO" id="GO:0005615">
    <property type="term" value="C:extracellular space"/>
    <property type="evidence" value="ECO:0000318"/>
    <property type="project" value="GO_Central"/>
</dbReference>
<dbReference type="GO" id="GO:0005179">
    <property type="term" value="F:hormone activity"/>
    <property type="evidence" value="ECO:0007669"/>
    <property type="project" value="UniProtKB-KW"/>
</dbReference>
<dbReference type="GO" id="GO:0007186">
    <property type="term" value="P:G protein-coupled receptor signaling pathway"/>
    <property type="evidence" value="ECO:0000318"/>
    <property type="project" value="GO_Central"/>
</dbReference>
<dbReference type="CDD" id="cd00069">
    <property type="entry name" value="GHB_like"/>
    <property type="match status" value="1"/>
</dbReference>
<dbReference type="FunFam" id="2.10.90.10:FF:000007">
    <property type="entry name" value="Luteinizing hormone beta subunit"/>
    <property type="match status" value="1"/>
</dbReference>
<dbReference type="Gene3D" id="2.10.90.10">
    <property type="entry name" value="Cystine-knot cytokines"/>
    <property type="match status" value="1"/>
</dbReference>
<dbReference type="InterPro" id="IPR029034">
    <property type="entry name" value="Cystine-knot_cytokine"/>
</dbReference>
<dbReference type="InterPro" id="IPR006208">
    <property type="entry name" value="Glyco_hormone_CN"/>
</dbReference>
<dbReference type="InterPro" id="IPR001545">
    <property type="entry name" value="Gonadotropin_bsu"/>
</dbReference>
<dbReference type="InterPro" id="IPR018245">
    <property type="entry name" value="Gonadotropin_bsu_CS"/>
</dbReference>
<dbReference type="PANTHER" id="PTHR11515">
    <property type="entry name" value="GLYCOPROTEIN HORMONE BETA CHAIN"/>
    <property type="match status" value="1"/>
</dbReference>
<dbReference type="PANTHER" id="PTHR11515:SF11">
    <property type="entry name" value="LUTROPIN SUBUNIT BETA"/>
    <property type="match status" value="1"/>
</dbReference>
<dbReference type="Pfam" id="PF00007">
    <property type="entry name" value="Cys_knot"/>
    <property type="match status" value="1"/>
</dbReference>
<dbReference type="SMART" id="SM00068">
    <property type="entry name" value="GHB"/>
    <property type="match status" value="1"/>
</dbReference>
<dbReference type="SUPFAM" id="SSF57501">
    <property type="entry name" value="Cystine-knot cytokines"/>
    <property type="match status" value="1"/>
</dbReference>
<dbReference type="PROSITE" id="PS00261">
    <property type="entry name" value="GLYCO_HORMONE_BETA_1"/>
    <property type="match status" value="1"/>
</dbReference>
<dbReference type="PROSITE" id="PS00689">
    <property type="entry name" value="GLYCO_HORMONE_BETA_2"/>
    <property type="match status" value="1"/>
</dbReference>
<name>LSHB_FELCA</name>
<gene>
    <name type="primary">LHB</name>
</gene>
<protein>
    <recommendedName>
        <fullName>Lutropin subunit beta</fullName>
        <shortName>Lutropin beta chain</shortName>
    </recommendedName>
    <alternativeName>
        <fullName>Luteinizing hormone subunit beta</fullName>
        <shortName>LH-B</shortName>
        <shortName>LSH-B</shortName>
        <shortName>LSH-beta</shortName>
    </alternativeName>
</protein>
<organism>
    <name type="scientific">Felis catus</name>
    <name type="common">Cat</name>
    <name type="synonym">Felis silvestris catus</name>
    <dbReference type="NCBI Taxonomy" id="9685"/>
    <lineage>
        <taxon>Eukaryota</taxon>
        <taxon>Metazoa</taxon>
        <taxon>Chordata</taxon>
        <taxon>Craniata</taxon>
        <taxon>Vertebrata</taxon>
        <taxon>Euteleostomi</taxon>
        <taxon>Mammalia</taxon>
        <taxon>Eutheria</taxon>
        <taxon>Laurasiatheria</taxon>
        <taxon>Carnivora</taxon>
        <taxon>Feliformia</taxon>
        <taxon>Felidae</taxon>
        <taxon>Felinae</taxon>
        <taxon>Felis</taxon>
    </lineage>
</organism>
<keyword id="KW-1015">Disulfide bond</keyword>
<keyword id="KW-0325">Glycoprotein</keyword>
<keyword id="KW-0372">Hormone</keyword>
<keyword id="KW-1185">Reference proteome</keyword>
<keyword id="KW-0964">Secreted</keyword>
<keyword id="KW-0732">Signal</keyword>
<evidence type="ECO:0000250" key="1"/>
<evidence type="ECO:0000255" key="2"/>
<evidence type="ECO:0000305" key="3"/>
<sequence length="143" mass="15318">MEMLQGLLLLWLLLLNVGGVWTSREPLRPLCRPINATLAAENEACPVCVTFTTTICAGYCPSMMRVLPAALPPVPQPVCTYRELRFASVRLPGCPPGVDPVVSFPVALSCRCGPCRLSSSDCGGPRAQPLACDRPPLPGLLFL</sequence>
<accession>O77805</accession>
<proteinExistence type="evidence at transcript level"/>
<comment type="function">
    <text>Promotes spermatogenesis and ovulation by stimulating the testes and ovaries to synthesize steroids.</text>
</comment>
<comment type="subunit">
    <text>Heterodimer of a common alpha chain and a unique beta chain which confers biological specificity to thyrotropin, lutropin, follitropin and gonadotropin.</text>
</comment>
<comment type="subcellular location">
    <subcellularLocation>
        <location>Secreted</location>
    </subcellularLocation>
</comment>
<comment type="similarity">
    <text evidence="3">Belongs to the glycoprotein hormones subunit beta family.</text>
</comment>
<reference key="1">
    <citation type="submission" date="1998-09" db="EMBL/GenBank/DDBJ databases">
        <title>Molecular cloning and sequence analysis of the cDNA for the feline luteinizing hormone beta subunit.</title>
        <authorList>
            <person name="Pukazhenthi B.S."/>
            <person name="Varma G.M."/>
            <person name="Brown J.L."/>
        </authorList>
    </citation>
    <scope>NUCLEOTIDE SEQUENCE [MRNA]</scope>
    <source>
        <tissue>Pituitary</tissue>
    </source>
</reference>
<feature type="signal peptide" evidence="1">
    <location>
        <begin position="1"/>
        <end position="22"/>
    </location>
</feature>
<feature type="chain" id="PRO_0000011724" description="Lutropin subunit beta">
    <location>
        <begin position="23"/>
        <end position="143"/>
    </location>
</feature>
<feature type="glycosylation site" description="N-linked (GlcNAc...) asparagine" evidence="2">
    <location>
        <position position="35"/>
    </location>
</feature>
<feature type="disulfide bond" evidence="1">
    <location>
        <begin position="31"/>
        <end position="79"/>
    </location>
</feature>
<feature type="disulfide bond" evidence="1">
    <location>
        <begin position="45"/>
        <end position="94"/>
    </location>
</feature>
<feature type="disulfide bond" evidence="1">
    <location>
        <begin position="48"/>
        <end position="132"/>
    </location>
</feature>
<feature type="disulfide bond" evidence="1">
    <location>
        <begin position="56"/>
        <end position="110"/>
    </location>
</feature>
<feature type="disulfide bond" evidence="1">
    <location>
        <begin position="60"/>
        <end position="112"/>
    </location>
</feature>
<feature type="disulfide bond" evidence="1">
    <location>
        <begin position="115"/>
        <end position="122"/>
    </location>
</feature>